<gene>
    <name type="primary">Sp110</name>
    <name type="synonym">Ipr1</name>
</gene>
<organism>
    <name type="scientific">Rattus norvegicus</name>
    <name type="common">Rat</name>
    <dbReference type="NCBI Taxonomy" id="10116"/>
    <lineage>
        <taxon>Eukaryota</taxon>
        <taxon>Metazoa</taxon>
        <taxon>Chordata</taxon>
        <taxon>Craniata</taxon>
        <taxon>Vertebrata</taxon>
        <taxon>Euteleostomi</taxon>
        <taxon>Mammalia</taxon>
        <taxon>Eutheria</taxon>
        <taxon>Euarchontoglires</taxon>
        <taxon>Glires</taxon>
        <taxon>Rodentia</taxon>
        <taxon>Myomorpha</taxon>
        <taxon>Muroidea</taxon>
        <taxon>Muridae</taxon>
        <taxon>Murinae</taxon>
        <taxon>Rattus</taxon>
    </lineage>
</organism>
<name>SP110_RAT</name>
<feature type="chain" id="PRO_0000247962" description="Sp110 nuclear body protein">
    <location>
        <begin position="1"/>
        <end position="478"/>
    </location>
</feature>
<feature type="domain" description="HSR" evidence="6">
    <location>
        <begin position="1"/>
        <end position="108"/>
    </location>
</feature>
<feature type="domain" description="SAND" evidence="5">
    <location>
        <begin position="385"/>
        <end position="466"/>
    </location>
</feature>
<feature type="region of interest" description="Disordered" evidence="7">
    <location>
        <begin position="131"/>
        <end position="310"/>
    </location>
</feature>
<feature type="region of interest" description="Disordered" evidence="7">
    <location>
        <begin position="337"/>
        <end position="385"/>
    </location>
</feature>
<feature type="short sequence motif" description="Nuclear localization signal" evidence="4">
    <location>
        <begin position="279"/>
        <end position="294"/>
    </location>
</feature>
<feature type="compositionally biased region" description="Polar residues" evidence="7">
    <location>
        <begin position="131"/>
        <end position="142"/>
    </location>
</feature>
<feature type="compositionally biased region" description="Basic and acidic residues" evidence="7">
    <location>
        <begin position="197"/>
        <end position="213"/>
    </location>
</feature>
<feature type="compositionally biased region" description="Basic residues" evidence="7">
    <location>
        <begin position="273"/>
        <end position="297"/>
    </location>
</feature>
<feature type="compositionally biased region" description="Basic residues" evidence="7">
    <location>
        <begin position="360"/>
        <end position="372"/>
    </location>
</feature>
<feature type="modified residue" description="Phosphoserine" evidence="2">
    <location>
        <position position="175"/>
    </location>
</feature>
<feature type="modified residue" description="Phosphoserine" evidence="2">
    <location>
        <position position="177"/>
    </location>
</feature>
<feature type="modified residue" description="Phosphoserine" evidence="3">
    <location>
        <position position="254"/>
    </location>
</feature>
<feature type="modified residue" description="Phosphoserine" evidence="8">
    <location>
        <position position="305"/>
    </location>
</feature>
<comment type="function">
    <text evidence="1">May act as a transcription factor. Plays a role in the innate immunity against intracellular pathogens. Required for resistance to M.tuberculosis and L.monocytogenes. Promotes apoptosis of infected cells (By similarity).</text>
</comment>
<comment type="subcellular location">
    <subcellularLocation>
        <location evidence="5 6">Nucleus</location>
    </subcellularLocation>
</comment>
<keyword id="KW-0053">Apoptosis</keyword>
<keyword id="KW-0238">DNA-binding</keyword>
<keyword id="KW-0391">Immunity</keyword>
<keyword id="KW-0399">Innate immunity</keyword>
<keyword id="KW-0539">Nucleus</keyword>
<keyword id="KW-0597">Phosphoprotein</keyword>
<keyword id="KW-1185">Reference proteome</keyword>
<keyword id="KW-0804">Transcription</keyword>
<keyword id="KW-0805">Transcription regulation</keyword>
<evidence type="ECO:0000250" key="1"/>
<evidence type="ECO:0000250" key="2">
    <source>
        <dbReference type="UniProtKB" id="Q8BVK9"/>
    </source>
</evidence>
<evidence type="ECO:0000250" key="3">
    <source>
        <dbReference type="UniProtKB" id="Q9HB58"/>
    </source>
</evidence>
<evidence type="ECO:0000255" key="4"/>
<evidence type="ECO:0000255" key="5">
    <source>
        <dbReference type="PROSITE-ProRule" id="PRU00185"/>
    </source>
</evidence>
<evidence type="ECO:0000255" key="6">
    <source>
        <dbReference type="PROSITE-ProRule" id="PRU00747"/>
    </source>
</evidence>
<evidence type="ECO:0000256" key="7">
    <source>
        <dbReference type="SAM" id="MobiDB-lite"/>
    </source>
</evidence>
<evidence type="ECO:0007744" key="8">
    <source>
    </source>
</evidence>
<sequence length="478" mass="53205">MFTLTKALEKALLQHFIYTKLDIAYAINKPFPFFEALRDNSFITERMYKESLEACQNLVPLSKVVHNILTSLEQTFDPSMLLILFSKVNLREYPSLGAICRSFRNVGNAYEGRNRPAPTLLGASTNPAEGCSFQTLLPQPRSQALPPSHLSSGLRIRDPGTTSLQITEILDEQPSPSHPAAPLPGYIREGKTTPVSSRDHQRKDKEDSQEMPHHPSGPEAVVKDILTSKTNNRDDSGAQPPGSPGTMHVVQDNSPAPNDPEVPQEAPCTPANKKARKRKSCIWSNSKRRRQKKKPPQHKMMGVASPGPGVQEKLKVVGQRTLNQDDSTRNVKVVTRTLRERTRCAQTSSSQEISKEASKPRARKRPQKRPHTAGRTIHVPEKSKDDAVDFLSPTLSVTCGEARGTLFKEKLKQGSSEKCIQNEAGAWLTVKEFLKKGGKATSKDWKKAIRCNKKTLRSLEQDGFLFCTSKSKPQKECD</sequence>
<proteinExistence type="evidence at protein level"/>
<protein>
    <recommendedName>
        <fullName>Sp110 nuclear body protein</fullName>
    </recommendedName>
    <alternativeName>
        <fullName>Intracellular pathogen resistance protein 1</fullName>
    </alternativeName>
</protein>
<dbReference type="EMBL" id="BC105751">
    <property type="protein sequence ID" value="AAI05752.1"/>
    <property type="molecule type" value="mRNA"/>
</dbReference>
<dbReference type="RefSeq" id="NP_001029309.1">
    <property type="nucleotide sequence ID" value="NM_001034137.1"/>
</dbReference>
<dbReference type="RefSeq" id="XP_038939329.1">
    <property type="nucleotide sequence ID" value="XM_039083401.2"/>
</dbReference>
<dbReference type="RefSeq" id="XP_038939330.1">
    <property type="nucleotide sequence ID" value="XM_039083402.2"/>
</dbReference>
<dbReference type="RefSeq" id="XP_063123090.1">
    <property type="nucleotide sequence ID" value="XM_063267020.1"/>
</dbReference>
<dbReference type="SMR" id="Q3KRF1"/>
<dbReference type="FunCoup" id="Q3KRF1">
    <property type="interactions" value="170"/>
</dbReference>
<dbReference type="STRING" id="10116.ENSRNOP00000053828"/>
<dbReference type="iPTMnet" id="Q3KRF1"/>
<dbReference type="PhosphoSitePlus" id="Q3KRF1"/>
<dbReference type="PaxDb" id="10116-ENSRNOP00000053828"/>
<dbReference type="Ensembl" id="ENSRNOT00000056995.5">
    <property type="protein sequence ID" value="ENSRNOP00000053828.5"/>
    <property type="gene ID" value="ENSRNOG00000033747.6"/>
</dbReference>
<dbReference type="GeneID" id="301570"/>
<dbReference type="KEGG" id="rno:301570"/>
<dbReference type="UCSC" id="RGD:1310173">
    <property type="organism name" value="rat"/>
</dbReference>
<dbReference type="AGR" id="RGD:1310173"/>
<dbReference type="CTD" id="3431"/>
<dbReference type="RGD" id="1310173">
    <property type="gene designation" value="Sp110"/>
</dbReference>
<dbReference type="eggNOG" id="KOG2177">
    <property type="taxonomic scope" value="Eukaryota"/>
</dbReference>
<dbReference type="InParanoid" id="Q3KRF1"/>
<dbReference type="OMA" id="QKARNEC"/>
<dbReference type="PhylomeDB" id="Q3KRF1"/>
<dbReference type="TreeFam" id="TF335091"/>
<dbReference type="PRO" id="PR:Q3KRF1"/>
<dbReference type="Proteomes" id="UP000002494">
    <property type="component" value="Chromosome 9"/>
</dbReference>
<dbReference type="GO" id="GO:0005634">
    <property type="term" value="C:nucleus"/>
    <property type="evidence" value="ECO:0000266"/>
    <property type="project" value="RGD"/>
</dbReference>
<dbReference type="GO" id="GO:0003677">
    <property type="term" value="F:DNA binding"/>
    <property type="evidence" value="ECO:0007669"/>
    <property type="project" value="UniProtKB-KW"/>
</dbReference>
<dbReference type="GO" id="GO:0000981">
    <property type="term" value="F:DNA-binding transcription factor activity, RNA polymerase II-specific"/>
    <property type="evidence" value="ECO:0000318"/>
    <property type="project" value="GO_Central"/>
</dbReference>
<dbReference type="GO" id="GO:0006915">
    <property type="term" value="P:apoptotic process"/>
    <property type="evidence" value="ECO:0007669"/>
    <property type="project" value="UniProtKB-KW"/>
</dbReference>
<dbReference type="GO" id="GO:0045087">
    <property type="term" value="P:innate immune response"/>
    <property type="evidence" value="ECO:0007669"/>
    <property type="project" value="UniProtKB-KW"/>
</dbReference>
<dbReference type="GO" id="GO:0043065">
    <property type="term" value="P:positive regulation of apoptotic process"/>
    <property type="evidence" value="ECO:0000266"/>
    <property type="project" value="RGD"/>
</dbReference>
<dbReference type="GO" id="GO:0006357">
    <property type="term" value="P:regulation of transcription by RNA polymerase II"/>
    <property type="evidence" value="ECO:0000318"/>
    <property type="project" value="GO_Central"/>
</dbReference>
<dbReference type="GO" id="GO:0009617">
    <property type="term" value="P:response to bacterium"/>
    <property type="evidence" value="ECO:0000266"/>
    <property type="project" value="RGD"/>
</dbReference>
<dbReference type="FunFam" id="3.10.390.10:FF:000004">
    <property type="entry name" value="Deformed epidermal autoregulatory factor 1"/>
    <property type="match status" value="1"/>
</dbReference>
<dbReference type="Gene3D" id="3.10.390.10">
    <property type="entry name" value="SAND domain-like"/>
    <property type="match status" value="1"/>
</dbReference>
<dbReference type="InterPro" id="IPR004865">
    <property type="entry name" value="HSR_dom"/>
</dbReference>
<dbReference type="InterPro" id="IPR010919">
    <property type="entry name" value="SAND-like_dom_sf"/>
</dbReference>
<dbReference type="InterPro" id="IPR000770">
    <property type="entry name" value="SAND_dom"/>
</dbReference>
<dbReference type="InterPro" id="IPR043563">
    <property type="entry name" value="Sp110/Sp140/Sp140L-like"/>
</dbReference>
<dbReference type="PANTHER" id="PTHR46386">
    <property type="entry name" value="NUCLEAR BODY PROTEIN SP140"/>
    <property type="match status" value="1"/>
</dbReference>
<dbReference type="PANTHER" id="PTHR46386:SF7">
    <property type="entry name" value="SP110 NUCLEAR BODY PROTEIN"/>
    <property type="match status" value="1"/>
</dbReference>
<dbReference type="Pfam" id="PF03172">
    <property type="entry name" value="HSR"/>
    <property type="match status" value="1"/>
</dbReference>
<dbReference type="Pfam" id="PF01342">
    <property type="entry name" value="SAND"/>
    <property type="match status" value="1"/>
</dbReference>
<dbReference type="SMART" id="SM00258">
    <property type="entry name" value="SAND"/>
    <property type="match status" value="1"/>
</dbReference>
<dbReference type="SUPFAM" id="SSF63763">
    <property type="entry name" value="SAND domain-like"/>
    <property type="match status" value="1"/>
</dbReference>
<dbReference type="PROSITE" id="PS51414">
    <property type="entry name" value="HSR"/>
    <property type="match status" value="1"/>
</dbReference>
<dbReference type="PROSITE" id="PS50864">
    <property type="entry name" value="SAND"/>
    <property type="match status" value="1"/>
</dbReference>
<accession>Q3KRF1</accession>
<reference key="1">
    <citation type="journal article" date="2004" name="Genome Res.">
        <title>The status, quality, and expansion of the NIH full-length cDNA project: the Mammalian Gene Collection (MGC).</title>
        <authorList>
            <consortium name="The MGC Project Team"/>
        </authorList>
    </citation>
    <scope>NUCLEOTIDE SEQUENCE [LARGE SCALE MRNA]</scope>
    <source>
        <tissue>Prostate</tissue>
    </source>
</reference>
<reference key="2">
    <citation type="journal article" date="2012" name="Nat. Commun.">
        <title>Quantitative maps of protein phosphorylation sites across 14 different rat organs and tissues.</title>
        <authorList>
            <person name="Lundby A."/>
            <person name="Secher A."/>
            <person name="Lage K."/>
            <person name="Nordsborg N.B."/>
            <person name="Dmytriyev A."/>
            <person name="Lundby C."/>
            <person name="Olsen J.V."/>
        </authorList>
    </citation>
    <scope>PHOSPHORYLATION [LARGE SCALE ANALYSIS] AT SER-305</scope>
    <scope>IDENTIFICATION BY MASS SPECTROMETRY [LARGE SCALE ANALYSIS]</scope>
</reference>